<gene>
    <name type="primary">opn1sw2</name>
    <name type="synonym">bluops</name>
    <name type="synonym">opn1sw1</name>
    <name type="synonym">sws2</name>
</gene>
<keyword id="KW-0157">Chromophore</keyword>
<keyword id="KW-1015">Disulfide bond</keyword>
<keyword id="KW-0297">G-protein coupled receptor</keyword>
<keyword id="KW-0325">Glycoprotein</keyword>
<keyword id="KW-0472">Membrane</keyword>
<keyword id="KW-0597">Phosphoprotein</keyword>
<keyword id="KW-0600">Photoreceptor protein</keyword>
<keyword id="KW-0675">Receptor</keyword>
<keyword id="KW-1185">Reference proteome</keyword>
<keyword id="KW-0681">Retinal protein</keyword>
<keyword id="KW-0716">Sensory transduction</keyword>
<keyword id="KW-0807">Transducer</keyword>
<keyword id="KW-0812">Transmembrane</keyword>
<keyword id="KW-1133">Transmembrane helix</keyword>
<keyword id="KW-0844">Vision</keyword>
<protein>
    <recommendedName>
        <fullName>Opsin-1, short-wave-sensitive 2</fullName>
    </recommendedName>
    <alternativeName>
        <fullName>Blue cone photoreceptor pigment</fullName>
    </alternativeName>
    <alternativeName>
        <fullName>Blue-sensitive opsin</fullName>
    </alternativeName>
    <alternativeName>
        <fullName>Opsin SWS-2</fullName>
    </alternativeName>
</protein>
<dbReference type="EMBL" id="AF109372">
    <property type="protein sequence ID" value="AAD24755.1"/>
    <property type="molecule type" value="mRNA"/>
</dbReference>
<dbReference type="EMBL" id="AB087809">
    <property type="protein sequence ID" value="BAC24133.1"/>
    <property type="molecule type" value="Genomic_DNA"/>
</dbReference>
<dbReference type="EMBL" id="AL844847">
    <property type="protein sequence ID" value="CAE30415.1"/>
    <property type="molecule type" value="Genomic_DNA"/>
</dbReference>
<dbReference type="EMBL" id="BC059418">
    <property type="protein sequence ID" value="AAH59418.1"/>
    <property type="molecule type" value="mRNA"/>
</dbReference>
<dbReference type="EMBL" id="BC062277">
    <property type="protein sequence ID" value="AAH62277.1"/>
    <property type="molecule type" value="mRNA"/>
</dbReference>
<dbReference type="RefSeq" id="NP_571267.1">
    <property type="nucleotide sequence ID" value="NM_131192.2"/>
</dbReference>
<dbReference type="SMR" id="Q9W6A8"/>
<dbReference type="FunCoup" id="Q9W6A8">
    <property type="interactions" value="10"/>
</dbReference>
<dbReference type="STRING" id="7955.ENSDARP00000019477"/>
<dbReference type="GlyCosmos" id="Q9W6A8">
    <property type="glycosylation" value="2 sites, No reported glycans"/>
</dbReference>
<dbReference type="PaxDb" id="7955-ENSDARP00000019477"/>
<dbReference type="Ensembl" id="ENSDART00000011178">
    <property type="protein sequence ID" value="ENSDARP00000019477"/>
    <property type="gene ID" value="ENSDARG00000017274"/>
</dbReference>
<dbReference type="Ensembl" id="ENSDART00000192024">
    <property type="protein sequence ID" value="ENSDARP00000144766"/>
    <property type="gene ID" value="ENSDARG00000115330"/>
</dbReference>
<dbReference type="GeneID" id="30435"/>
<dbReference type="KEGG" id="dre:30435"/>
<dbReference type="AGR" id="ZFIN:ZDB-GENE-990604-40"/>
<dbReference type="CTD" id="30435"/>
<dbReference type="ZFIN" id="ZDB-GENE-990604-40">
    <property type="gene designation" value="opn1sw2"/>
</dbReference>
<dbReference type="eggNOG" id="KOG3656">
    <property type="taxonomic scope" value="Eukaryota"/>
</dbReference>
<dbReference type="InParanoid" id="Q9W6A8"/>
<dbReference type="OMA" id="LTIACTM"/>
<dbReference type="OrthoDB" id="6142583at2759"/>
<dbReference type="PhylomeDB" id="Q9W6A8"/>
<dbReference type="TreeFam" id="TF324998"/>
<dbReference type="PRO" id="PR:Q9W6A8"/>
<dbReference type="Proteomes" id="UP000000437">
    <property type="component" value="Alternate scaffold 11"/>
</dbReference>
<dbReference type="Proteomes" id="UP000000437">
    <property type="component" value="Chromosome 11"/>
</dbReference>
<dbReference type="Bgee" id="ENSDARG00000017274">
    <property type="expression patterns" value="Expressed in retina and 14 other cell types or tissues"/>
</dbReference>
<dbReference type="ExpressionAtlas" id="Q9W6A8">
    <property type="expression patterns" value="baseline and differential"/>
</dbReference>
<dbReference type="GO" id="GO:0001750">
    <property type="term" value="C:photoreceptor outer segment"/>
    <property type="evidence" value="ECO:0000314"/>
    <property type="project" value="ZFIN"/>
</dbReference>
<dbReference type="GO" id="GO:0005886">
    <property type="term" value="C:plasma membrane"/>
    <property type="evidence" value="ECO:0000318"/>
    <property type="project" value="GO_Central"/>
</dbReference>
<dbReference type="GO" id="GO:0009882">
    <property type="term" value="F:blue light photoreceptor activity"/>
    <property type="evidence" value="ECO:0000303"/>
    <property type="project" value="UniProtKB"/>
</dbReference>
<dbReference type="GO" id="GO:0008020">
    <property type="term" value="F:G protein-coupled photoreceptor activity"/>
    <property type="evidence" value="ECO:0000318"/>
    <property type="project" value="GO_Central"/>
</dbReference>
<dbReference type="GO" id="GO:0071482">
    <property type="term" value="P:cellular response to light stimulus"/>
    <property type="evidence" value="ECO:0000318"/>
    <property type="project" value="GO_Central"/>
</dbReference>
<dbReference type="GO" id="GO:0009584">
    <property type="term" value="P:detection of visible light"/>
    <property type="evidence" value="ECO:0000315"/>
    <property type="project" value="ZFIN"/>
</dbReference>
<dbReference type="GO" id="GO:0007186">
    <property type="term" value="P:G protein-coupled receptor signaling pathway"/>
    <property type="evidence" value="ECO:0000318"/>
    <property type="project" value="GO_Central"/>
</dbReference>
<dbReference type="GO" id="GO:0042331">
    <property type="term" value="P:phototaxis"/>
    <property type="evidence" value="ECO:0000315"/>
    <property type="project" value="ZFIN"/>
</dbReference>
<dbReference type="GO" id="GO:0007602">
    <property type="term" value="P:phototransduction"/>
    <property type="evidence" value="ECO:0000318"/>
    <property type="project" value="GO_Central"/>
</dbReference>
<dbReference type="GO" id="GO:0007601">
    <property type="term" value="P:visual perception"/>
    <property type="evidence" value="ECO:0007669"/>
    <property type="project" value="UniProtKB-KW"/>
</dbReference>
<dbReference type="CDD" id="cd15077">
    <property type="entry name" value="7tmA_SWS2_opsin"/>
    <property type="match status" value="1"/>
</dbReference>
<dbReference type="FunFam" id="1.20.1070.10:FF:000018">
    <property type="entry name" value="Rhodopsin"/>
    <property type="match status" value="1"/>
</dbReference>
<dbReference type="Gene3D" id="1.20.1070.10">
    <property type="entry name" value="Rhodopsin 7-helix transmembrane proteins"/>
    <property type="match status" value="1"/>
</dbReference>
<dbReference type="InterPro" id="IPR050125">
    <property type="entry name" value="GPCR_opsins"/>
</dbReference>
<dbReference type="InterPro" id="IPR000276">
    <property type="entry name" value="GPCR_Rhodpsn"/>
</dbReference>
<dbReference type="InterPro" id="IPR017452">
    <property type="entry name" value="GPCR_Rhodpsn_7TM"/>
</dbReference>
<dbReference type="InterPro" id="IPR001760">
    <property type="entry name" value="Opsin"/>
</dbReference>
<dbReference type="InterPro" id="IPR001521">
    <property type="entry name" value="Opsin_blue"/>
</dbReference>
<dbReference type="InterPro" id="IPR027430">
    <property type="entry name" value="Retinal_BS"/>
</dbReference>
<dbReference type="PANTHER" id="PTHR24240">
    <property type="entry name" value="OPSIN"/>
    <property type="match status" value="1"/>
</dbReference>
<dbReference type="Pfam" id="PF00001">
    <property type="entry name" value="7tm_1"/>
    <property type="match status" value="1"/>
</dbReference>
<dbReference type="PRINTS" id="PR00237">
    <property type="entry name" value="GPCRRHODOPSN"/>
</dbReference>
<dbReference type="PRINTS" id="PR00238">
    <property type="entry name" value="OPSIN"/>
</dbReference>
<dbReference type="PRINTS" id="PR00574">
    <property type="entry name" value="OPSINBLUE"/>
</dbReference>
<dbReference type="SUPFAM" id="SSF81321">
    <property type="entry name" value="Family A G protein-coupled receptor-like"/>
    <property type="match status" value="1"/>
</dbReference>
<dbReference type="PROSITE" id="PS00237">
    <property type="entry name" value="G_PROTEIN_RECEP_F1_1"/>
    <property type="match status" value="1"/>
</dbReference>
<dbReference type="PROSITE" id="PS50262">
    <property type="entry name" value="G_PROTEIN_RECEP_F1_2"/>
    <property type="match status" value="1"/>
</dbReference>
<dbReference type="PROSITE" id="PS00238">
    <property type="entry name" value="OPSIN"/>
    <property type="match status" value="1"/>
</dbReference>
<proteinExistence type="evidence at protein level"/>
<sequence>MKQQQQTPELFEDFHMPITLDVSNISAYSPFLVPQDHLGHSGVFMGMSAFMLFLFIAGTAINVLTIVCTIQYKKLRSHLNYILVNLAISNLWVSVFGSSVAFYAFYKKYFVFGPIGCKIEGFTSTIGGMVSLWSLAVVALERWLVICKPLGNFTFKTPHAIAGCILPWCMALAAGLPPLLGWSRYIPEGLQCSCGPDWYTTNNKFNNESYVMFLFCFCFAVPFSTIVFCYGQLLITLKLAAKAQADSASTQKAEREVTKMVVVMVFGFLICWGPYAIFAIWVVSNRGAPFDLRLATIPSCLCKASTVYNPVIYVLMNKQFRSCMMKMVFNKNIEEDEASSSSQVTQVSSVAPEK</sequence>
<reference key="1">
    <citation type="journal article" date="1999" name="Vis. Neurosci.">
        <title>Cloning and characterization of six zebrafish photoreceptor opsin cDNAs and immunolocalization of their corresponding proteins.</title>
        <authorList>
            <person name="Vihtelic T.S."/>
            <person name="Doro C.J."/>
            <person name="Hyde D.R."/>
        </authorList>
    </citation>
    <scope>NUCLEOTIDE SEQUENCE [MRNA]</scope>
    <scope>TISSUE SPECIFICITY</scope>
    <source>
        <tissue>Eye</tissue>
    </source>
</reference>
<reference key="2">
    <citation type="journal article" date="2003" name="Genetics">
        <title>Gene duplication and spectral diversification of cone visual pigments of zebrafish.</title>
        <authorList>
            <person name="Chinen A."/>
            <person name="Hamaoka T."/>
            <person name="Yamada Y."/>
            <person name="Kawamura S."/>
        </authorList>
    </citation>
    <scope>NUCLEOTIDE SEQUENCE [GENOMIC DNA / MRNA]</scope>
    <scope>BIOPHYSICOCHEMICAL PROPERTIES</scope>
    <source>
        <strain>AB</strain>
        <tissue>Eye</tissue>
    </source>
</reference>
<reference key="3">
    <citation type="journal article" date="2013" name="Nature">
        <title>The zebrafish reference genome sequence and its relationship to the human genome.</title>
        <authorList>
            <person name="Howe K."/>
            <person name="Clark M.D."/>
            <person name="Torroja C.F."/>
            <person name="Torrance J."/>
            <person name="Berthelot C."/>
            <person name="Muffato M."/>
            <person name="Collins J.E."/>
            <person name="Humphray S."/>
            <person name="McLaren K."/>
            <person name="Matthews L."/>
            <person name="McLaren S."/>
            <person name="Sealy I."/>
            <person name="Caccamo M."/>
            <person name="Churcher C."/>
            <person name="Scott C."/>
            <person name="Barrett J.C."/>
            <person name="Koch R."/>
            <person name="Rauch G.J."/>
            <person name="White S."/>
            <person name="Chow W."/>
            <person name="Kilian B."/>
            <person name="Quintais L.T."/>
            <person name="Guerra-Assuncao J.A."/>
            <person name="Zhou Y."/>
            <person name="Gu Y."/>
            <person name="Yen J."/>
            <person name="Vogel J.H."/>
            <person name="Eyre T."/>
            <person name="Redmond S."/>
            <person name="Banerjee R."/>
            <person name="Chi J."/>
            <person name="Fu B."/>
            <person name="Langley E."/>
            <person name="Maguire S.F."/>
            <person name="Laird G.K."/>
            <person name="Lloyd D."/>
            <person name="Kenyon E."/>
            <person name="Donaldson S."/>
            <person name="Sehra H."/>
            <person name="Almeida-King J."/>
            <person name="Loveland J."/>
            <person name="Trevanion S."/>
            <person name="Jones M."/>
            <person name="Quail M."/>
            <person name="Willey D."/>
            <person name="Hunt A."/>
            <person name="Burton J."/>
            <person name="Sims S."/>
            <person name="McLay K."/>
            <person name="Plumb B."/>
            <person name="Davis J."/>
            <person name="Clee C."/>
            <person name="Oliver K."/>
            <person name="Clark R."/>
            <person name="Riddle C."/>
            <person name="Elliot D."/>
            <person name="Threadgold G."/>
            <person name="Harden G."/>
            <person name="Ware D."/>
            <person name="Begum S."/>
            <person name="Mortimore B."/>
            <person name="Kerry G."/>
            <person name="Heath P."/>
            <person name="Phillimore B."/>
            <person name="Tracey A."/>
            <person name="Corby N."/>
            <person name="Dunn M."/>
            <person name="Johnson C."/>
            <person name="Wood J."/>
            <person name="Clark S."/>
            <person name="Pelan S."/>
            <person name="Griffiths G."/>
            <person name="Smith M."/>
            <person name="Glithero R."/>
            <person name="Howden P."/>
            <person name="Barker N."/>
            <person name="Lloyd C."/>
            <person name="Stevens C."/>
            <person name="Harley J."/>
            <person name="Holt K."/>
            <person name="Panagiotidis G."/>
            <person name="Lovell J."/>
            <person name="Beasley H."/>
            <person name="Henderson C."/>
            <person name="Gordon D."/>
            <person name="Auger K."/>
            <person name="Wright D."/>
            <person name="Collins J."/>
            <person name="Raisen C."/>
            <person name="Dyer L."/>
            <person name="Leung K."/>
            <person name="Robertson L."/>
            <person name="Ambridge K."/>
            <person name="Leongamornlert D."/>
            <person name="McGuire S."/>
            <person name="Gilderthorp R."/>
            <person name="Griffiths C."/>
            <person name="Manthravadi D."/>
            <person name="Nichol S."/>
            <person name="Barker G."/>
            <person name="Whitehead S."/>
            <person name="Kay M."/>
            <person name="Brown J."/>
            <person name="Murnane C."/>
            <person name="Gray E."/>
            <person name="Humphries M."/>
            <person name="Sycamore N."/>
            <person name="Barker D."/>
            <person name="Saunders D."/>
            <person name="Wallis J."/>
            <person name="Babbage A."/>
            <person name="Hammond S."/>
            <person name="Mashreghi-Mohammadi M."/>
            <person name="Barr L."/>
            <person name="Martin S."/>
            <person name="Wray P."/>
            <person name="Ellington A."/>
            <person name="Matthews N."/>
            <person name="Ellwood M."/>
            <person name="Woodmansey R."/>
            <person name="Clark G."/>
            <person name="Cooper J."/>
            <person name="Tromans A."/>
            <person name="Grafham D."/>
            <person name="Skuce C."/>
            <person name="Pandian R."/>
            <person name="Andrews R."/>
            <person name="Harrison E."/>
            <person name="Kimberley A."/>
            <person name="Garnett J."/>
            <person name="Fosker N."/>
            <person name="Hall R."/>
            <person name="Garner P."/>
            <person name="Kelly D."/>
            <person name="Bird C."/>
            <person name="Palmer S."/>
            <person name="Gehring I."/>
            <person name="Berger A."/>
            <person name="Dooley C.M."/>
            <person name="Ersan-Urun Z."/>
            <person name="Eser C."/>
            <person name="Geiger H."/>
            <person name="Geisler M."/>
            <person name="Karotki L."/>
            <person name="Kirn A."/>
            <person name="Konantz J."/>
            <person name="Konantz M."/>
            <person name="Oberlander M."/>
            <person name="Rudolph-Geiger S."/>
            <person name="Teucke M."/>
            <person name="Lanz C."/>
            <person name="Raddatz G."/>
            <person name="Osoegawa K."/>
            <person name="Zhu B."/>
            <person name="Rapp A."/>
            <person name="Widaa S."/>
            <person name="Langford C."/>
            <person name="Yang F."/>
            <person name="Schuster S.C."/>
            <person name="Carter N.P."/>
            <person name="Harrow J."/>
            <person name="Ning Z."/>
            <person name="Herrero J."/>
            <person name="Searle S.M."/>
            <person name="Enright A."/>
            <person name="Geisler R."/>
            <person name="Plasterk R.H."/>
            <person name="Lee C."/>
            <person name="Westerfield M."/>
            <person name="de Jong P.J."/>
            <person name="Zon L.I."/>
            <person name="Postlethwait J.H."/>
            <person name="Nusslein-Volhard C."/>
            <person name="Hubbard T.J."/>
            <person name="Roest Crollius H."/>
            <person name="Rogers J."/>
            <person name="Stemple D.L."/>
        </authorList>
    </citation>
    <scope>NUCLEOTIDE SEQUENCE [LARGE SCALE GENOMIC DNA]</scope>
    <source>
        <strain>Tuebingen</strain>
    </source>
</reference>
<reference key="4">
    <citation type="submission" date="2003-11" db="EMBL/GenBank/DDBJ databases">
        <authorList>
            <consortium name="NIH - Zebrafish Gene Collection (ZGC) project"/>
        </authorList>
    </citation>
    <scope>NUCLEOTIDE SEQUENCE [LARGE SCALE MRNA]</scope>
    <source>
        <tissue>Retina</tissue>
    </source>
</reference>
<feature type="chain" id="PRO_0000197755" description="Opsin-1, short-wave-sensitive 2">
    <location>
        <begin position="1"/>
        <end position="354"/>
    </location>
</feature>
<feature type="topological domain" description="Extracellular" evidence="2">
    <location>
        <begin position="1"/>
        <end position="43"/>
    </location>
</feature>
<feature type="transmembrane region" description="Helical; Name=1" evidence="2">
    <location>
        <begin position="44"/>
        <end position="68"/>
    </location>
</feature>
<feature type="topological domain" description="Cytoplasmic" evidence="2">
    <location>
        <begin position="69"/>
        <end position="80"/>
    </location>
</feature>
<feature type="transmembrane region" description="Helical; Name=2" evidence="2">
    <location>
        <begin position="81"/>
        <end position="106"/>
    </location>
</feature>
<feature type="topological domain" description="Extracellular" evidence="2">
    <location>
        <begin position="107"/>
        <end position="120"/>
    </location>
</feature>
<feature type="transmembrane region" description="Helical; Name=3" evidence="2">
    <location>
        <begin position="121"/>
        <end position="140"/>
    </location>
</feature>
<feature type="topological domain" description="Cytoplasmic" evidence="2">
    <location>
        <begin position="141"/>
        <end position="159"/>
    </location>
</feature>
<feature type="transmembrane region" description="Helical; Name=4" evidence="2">
    <location>
        <begin position="160"/>
        <end position="183"/>
    </location>
</feature>
<feature type="topological domain" description="Extracellular" evidence="2">
    <location>
        <begin position="184"/>
        <end position="209"/>
    </location>
</feature>
<feature type="transmembrane region" description="Helical; Name=5" evidence="2">
    <location>
        <begin position="210"/>
        <end position="237"/>
    </location>
</feature>
<feature type="topological domain" description="Cytoplasmic" evidence="2">
    <location>
        <begin position="238"/>
        <end position="259"/>
    </location>
</feature>
<feature type="transmembrane region" description="Helical; Name=6" evidence="2">
    <location>
        <begin position="260"/>
        <end position="283"/>
    </location>
</feature>
<feature type="topological domain" description="Extracellular" evidence="2">
    <location>
        <begin position="284"/>
        <end position="291"/>
    </location>
</feature>
<feature type="transmembrane region" description="Helical; Name=7" evidence="2">
    <location>
        <begin position="292"/>
        <end position="316"/>
    </location>
</feature>
<feature type="topological domain" description="Cytoplasmic" evidence="2">
    <location>
        <begin position="317"/>
        <end position="354"/>
    </location>
</feature>
<feature type="modified residue" description="N6-(retinylidene)lysine" evidence="1">
    <location>
        <position position="303"/>
    </location>
</feature>
<feature type="glycosylation site" description="N-linked (GlcNAc...) asparagine" evidence="2">
    <location>
        <position position="24"/>
    </location>
</feature>
<feature type="glycosylation site" description="N-linked (GlcNAc...) asparagine" evidence="2">
    <location>
        <position position="207"/>
    </location>
</feature>
<feature type="disulfide bond" evidence="3">
    <location>
        <begin position="117"/>
        <end position="194"/>
    </location>
</feature>
<accession>Q9W6A8</accession>
<organism>
    <name type="scientific">Danio rerio</name>
    <name type="common">Zebrafish</name>
    <name type="synonym">Brachydanio rerio</name>
    <dbReference type="NCBI Taxonomy" id="7955"/>
    <lineage>
        <taxon>Eukaryota</taxon>
        <taxon>Metazoa</taxon>
        <taxon>Chordata</taxon>
        <taxon>Craniata</taxon>
        <taxon>Vertebrata</taxon>
        <taxon>Euteleostomi</taxon>
        <taxon>Actinopterygii</taxon>
        <taxon>Neopterygii</taxon>
        <taxon>Teleostei</taxon>
        <taxon>Ostariophysi</taxon>
        <taxon>Cypriniformes</taxon>
        <taxon>Danionidae</taxon>
        <taxon>Danioninae</taxon>
        <taxon>Danio</taxon>
    </lineage>
</organism>
<comment type="function">
    <text>Visual pigments are the light-absorbing molecules that mediate vision. They consist of an apoprotein, opsin, covalently linked to cis-retinal.</text>
</comment>
<comment type="biophysicochemical properties">
    <absorption>
        <max evidence="5">416 nm</max>
    </absorption>
</comment>
<comment type="subcellular location">
    <subcellularLocation>
        <location>Membrane</location>
        <topology>Multi-pass membrane protein</topology>
    </subcellularLocation>
</comment>
<comment type="tissue specificity">
    <text evidence="4">Retinal long single cone outer segments.</text>
</comment>
<comment type="PTM">
    <text evidence="1">Phosphorylated on some or all of the serine and threonine residues present in the C-terminal region.</text>
</comment>
<comment type="similarity">
    <text evidence="3">Belongs to the G-protein coupled receptor 1 family. Opsin subfamily.</text>
</comment>
<name>OP1S2_DANRE</name>
<evidence type="ECO:0000250" key="1"/>
<evidence type="ECO:0000255" key="2"/>
<evidence type="ECO:0000255" key="3">
    <source>
        <dbReference type="PROSITE-ProRule" id="PRU00521"/>
    </source>
</evidence>
<evidence type="ECO:0000269" key="4">
    <source>
    </source>
</evidence>
<evidence type="ECO:0000269" key="5">
    <source>
    </source>
</evidence>